<comment type="cofactor">
    <cofactor evidence="1">
        <name>Zn(2+)</name>
        <dbReference type="ChEBI" id="CHEBI:29105"/>
    </cofactor>
    <text evidence="1">Binds 1 zinc ion per subunit.</text>
</comment>
<comment type="subcellular location">
    <subcellularLocation>
        <location evidence="1">Cell membrane</location>
        <topology evidence="1">Multi-pass membrane protein</topology>
    </subcellularLocation>
</comment>
<comment type="similarity">
    <text evidence="1">Belongs to the peptidase M48B family.</text>
</comment>
<accession>Q65KL0</accession>
<accession>Q62W09</accession>
<sequence>MGKRIFLFLLSNILVITTIGIVLSIIGSLTGVGTYFTANGGIDIVALLVFSAVVGFVGSFMSLLMSRWMAKMAMGVQVLNPDKQTLSYEEQQLVDRVYKLSRAAGLTKMPEVGIYNSREVNAFATGPSKNRSLVAVSTGLLQEMDDDAVEGVLAHEVAHIANGDMVTMTLLQGIVNTFVVFFARIAAWAVSRVVREELAPIVHFIAVIVFQIVFSILGSLVVFAYSRHREYHADRGGADLAGKDKMIHALRSLEQYTSRVKEEQASVATLKINGKKHTSLFSTHPDLSDRIRRLEAK</sequence>
<name>HTPX_BACLD</name>
<dbReference type="EC" id="3.4.24.-" evidence="1"/>
<dbReference type="EMBL" id="CP000002">
    <property type="protein sequence ID" value="AAU23049.1"/>
    <property type="molecule type" value="Genomic_DNA"/>
</dbReference>
<dbReference type="EMBL" id="AE017333">
    <property type="protein sequence ID" value="AAU40404.1"/>
    <property type="molecule type" value="Genomic_DNA"/>
</dbReference>
<dbReference type="RefSeq" id="WP_003181048.1">
    <property type="nucleotide sequence ID" value="NC_006322.1"/>
</dbReference>
<dbReference type="SMR" id="Q65KL0"/>
<dbReference type="STRING" id="279010.BL03531"/>
<dbReference type="GeneID" id="92861908"/>
<dbReference type="KEGG" id="bld:BLi01503"/>
<dbReference type="KEGG" id="bli:BL03531"/>
<dbReference type="eggNOG" id="COG0501">
    <property type="taxonomic scope" value="Bacteria"/>
</dbReference>
<dbReference type="HOGENOM" id="CLU_042266_1_0_9"/>
<dbReference type="Proteomes" id="UP000000606">
    <property type="component" value="Chromosome"/>
</dbReference>
<dbReference type="GO" id="GO:0005886">
    <property type="term" value="C:plasma membrane"/>
    <property type="evidence" value="ECO:0007669"/>
    <property type="project" value="UniProtKB-SubCell"/>
</dbReference>
<dbReference type="GO" id="GO:0004222">
    <property type="term" value="F:metalloendopeptidase activity"/>
    <property type="evidence" value="ECO:0007669"/>
    <property type="project" value="UniProtKB-UniRule"/>
</dbReference>
<dbReference type="GO" id="GO:0008270">
    <property type="term" value="F:zinc ion binding"/>
    <property type="evidence" value="ECO:0007669"/>
    <property type="project" value="UniProtKB-UniRule"/>
</dbReference>
<dbReference type="GO" id="GO:0006508">
    <property type="term" value="P:proteolysis"/>
    <property type="evidence" value="ECO:0007669"/>
    <property type="project" value="UniProtKB-KW"/>
</dbReference>
<dbReference type="CDD" id="cd07335">
    <property type="entry name" value="M48B_HtpX_like"/>
    <property type="match status" value="1"/>
</dbReference>
<dbReference type="Gene3D" id="3.30.2010.10">
    <property type="entry name" value="Metalloproteases ('zincins'), catalytic domain"/>
    <property type="match status" value="1"/>
</dbReference>
<dbReference type="HAMAP" id="MF_00188">
    <property type="entry name" value="Pept_M48_protease_HtpX"/>
    <property type="match status" value="1"/>
</dbReference>
<dbReference type="InterPro" id="IPR050083">
    <property type="entry name" value="HtpX_protease"/>
</dbReference>
<dbReference type="InterPro" id="IPR022919">
    <property type="entry name" value="Pept_M48_protease_HtpX"/>
</dbReference>
<dbReference type="InterPro" id="IPR001915">
    <property type="entry name" value="Peptidase_M48"/>
</dbReference>
<dbReference type="NCBIfam" id="NF003965">
    <property type="entry name" value="PRK05457.1"/>
    <property type="match status" value="1"/>
</dbReference>
<dbReference type="PANTHER" id="PTHR43221">
    <property type="entry name" value="PROTEASE HTPX"/>
    <property type="match status" value="1"/>
</dbReference>
<dbReference type="PANTHER" id="PTHR43221:SF1">
    <property type="entry name" value="PROTEASE HTPX"/>
    <property type="match status" value="1"/>
</dbReference>
<dbReference type="Pfam" id="PF01435">
    <property type="entry name" value="Peptidase_M48"/>
    <property type="match status" value="1"/>
</dbReference>
<protein>
    <recommendedName>
        <fullName evidence="1">Protease HtpX homolog</fullName>
        <ecNumber evidence="1">3.4.24.-</ecNumber>
    </recommendedName>
</protein>
<proteinExistence type="inferred from homology"/>
<organism>
    <name type="scientific">Bacillus licheniformis (strain ATCC 14580 / DSM 13 / JCM 2505 / CCUG 7422 / NBRC 12200 / NCIMB 9375 / NCTC 10341 / NRRL NRS-1264 / Gibson 46)</name>
    <dbReference type="NCBI Taxonomy" id="279010"/>
    <lineage>
        <taxon>Bacteria</taxon>
        <taxon>Bacillati</taxon>
        <taxon>Bacillota</taxon>
        <taxon>Bacilli</taxon>
        <taxon>Bacillales</taxon>
        <taxon>Bacillaceae</taxon>
        <taxon>Bacillus</taxon>
    </lineage>
</organism>
<evidence type="ECO:0000255" key="1">
    <source>
        <dbReference type="HAMAP-Rule" id="MF_00188"/>
    </source>
</evidence>
<keyword id="KW-1003">Cell membrane</keyword>
<keyword id="KW-0378">Hydrolase</keyword>
<keyword id="KW-0472">Membrane</keyword>
<keyword id="KW-0479">Metal-binding</keyword>
<keyword id="KW-0482">Metalloprotease</keyword>
<keyword id="KW-0645">Protease</keyword>
<keyword id="KW-1185">Reference proteome</keyword>
<keyword id="KW-0812">Transmembrane</keyword>
<keyword id="KW-1133">Transmembrane helix</keyword>
<keyword id="KW-0862">Zinc</keyword>
<gene>
    <name evidence="1" type="primary">htpX</name>
    <name type="ordered locus">BLi01503</name>
    <name type="ordered locus">BL03531</name>
</gene>
<reference key="1">
    <citation type="journal article" date="2004" name="J. Mol. Microbiol. Biotechnol.">
        <title>The complete genome sequence of Bacillus licheniformis DSM13, an organism with great industrial potential.</title>
        <authorList>
            <person name="Veith B."/>
            <person name="Herzberg C."/>
            <person name="Steckel S."/>
            <person name="Feesche J."/>
            <person name="Maurer K.H."/>
            <person name="Ehrenreich P."/>
            <person name="Baeumer S."/>
            <person name="Henne A."/>
            <person name="Liesegang H."/>
            <person name="Merkl R."/>
            <person name="Ehrenreich A."/>
            <person name="Gottschalk G."/>
        </authorList>
    </citation>
    <scope>NUCLEOTIDE SEQUENCE [LARGE SCALE GENOMIC DNA]</scope>
    <source>
        <strain>ATCC 14580 / DSM 13 / JCM 2505 / CCUG 7422 / NBRC 12200 / NCIMB 9375 / NCTC 10341 / NRRL NRS-1264 / Gibson 46</strain>
    </source>
</reference>
<reference key="2">
    <citation type="journal article" date="2004" name="Genome Biol.">
        <title>Complete genome sequence of the industrial bacterium Bacillus licheniformis and comparisons with closely related Bacillus species.</title>
        <authorList>
            <person name="Rey M.W."/>
            <person name="Ramaiya P."/>
            <person name="Nelson B.A."/>
            <person name="Brody-Karpin S.D."/>
            <person name="Zaretsky E.J."/>
            <person name="Tang M."/>
            <person name="Lopez de Leon A."/>
            <person name="Xiang H."/>
            <person name="Gusti V."/>
            <person name="Clausen I.G."/>
            <person name="Olsen P.B."/>
            <person name="Rasmussen M.D."/>
            <person name="Andersen J.T."/>
            <person name="Joergensen P.L."/>
            <person name="Larsen T.S."/>
            <person name="Sorokin A."/>
            <person name="Bolotin A."/>
            <person name="Lapidus A."/>
            <person name="Galleron N."/>
            <person name="Ehrlich S.D."/>
            <person name="Berka R.M."/>
        </authorList>
    </citation>
    <scope>NUCLEOTIDE SEQUENCE [LARGE SCALE GENOMIC DNA]</scope>
    <source>
        <strain>ATCC 14580 / DSM 13 / JCM 2505 / CCUG 7422 / NBRC 12200 / NCIMB 9375 / NCTC 10341 / NRRL NRS-1264 / Gibson 46</strain>
    </source>
</reference>
<feature type="chain" id="PRO_1000020846" description="Protease HtpX homolog">
    <location>
        <begin position="1"/>
        <end position="297"/>
    </location>
</feature>
<feature type="transmembrane region" description="Helical" evidence="1">
    <location>
        <begin position="5"/>
        <end position="25"/>
    </location>
</feature>
<feature type="transmembrane region" description="Helical" evidence="1">
    <location>
        <begin position="44"/>
        <end position="64"/>
    </location>
</feature>
<feature type="transmembrane region" description="Helical" evidence="1">
    <location>
        <begin position="170"/>
        <end position="190"/>
    </location>
</feature>
<feature type="transmembrane region" description="Helical" evidence="1">
    <location>
        <begin position="204"/>
        <end position="224"/>
    </location>
</feature>
<feature type="active site" evidence="1">
    <location>
        <position position="156"/>
    </location>
</feature>
<feature type="binding site" evidence="1">
    <location>
        <position position="155"/>
    </location>
    <ligand>
        <name>Zn(2+)</name>
        <dbReference type="ChEBI" id="CHEBI:29105"/>
        <note>catalytic</note>
    </ligand>
</feature>
<feature type="binding site" evidence="1">
    <location>
        <position position="159"/>
    </location>
    <ligand>
        <name>Zn(2+)</name>
        <dbReference type="ChEBI" id="CHEBI:29105"/>
        <note>catalytic</note>
    </ligand>
</feature>
<feature type="binding site" evidence="1">
    <location>
        <position position="230"/>
    </location>
    <ligand>
        <name>Zn(2+)</name>
        <dbReference type="ChEBI" id="CHEBI:29105"/>
        <note>catalytic</note>
    </ligand>
</feature>